<gene>
    <name evidence="1" type="primary">mutH</name>
    <name type="ordered locus">bbp_018</name>
</gene>
<organism>
    <name type="scientific">Buchnera aphidicola subsp. Baizongia pistaciae (strain Bp)</name>
    <dbReference type="NCBI Taxonomy" id="224915"/>
    <lineage>
        <taxon>Bacteria</taxon>
        <taxon>Pseudomonadati</taxon>
        <taxon>Pseudomonadota</taxon>
        <taxon>Gammaproteobacteria</taxon>
        <taxon>Enterobacterales</taxon>
        <taxon>Erwiniaceae</taxon>
        <taxon>Buchnera</taxon>
    </lineage>
</organism>
<accession>Q89B33</accession>
<protein>
    <recommendedName>
        <fullName evidence="1">DNA mismatch repair protein MutH</fullName>
    </recommendedName>
    <alternativeName>
        <fullName evidence="1">Methyl-directed mismatch repair protein</fullName>
    </alternativeName>
</protein>
<reference key="1">
    <citation type="journal article" date="2003" name="Proc. Natl. Acad. Sci. U.S.A.">
        <title>Reductive genome evolution in Buchnera aphidicola.</title>
        <authorList>
            <person name="van Ham R.C.H.J."/>
            <person name="Kamerbeek J."/>
            <person name="Palacios C."/>
            <person name="Rausell C."/>
            <person name="Abascal F."/>
            <person name="Bastolla U."/>
            <person name="Fernandez J.M."/>
            <person name="Jimenez L."/>
            <person name="Postigo M."/>
            <person name="Silva F.J."/>
            <person name="Tamames J."/>
            <person name="Viguera E."/>
            <person name="Latorre A."/>
            <person name="Valencia A."/>
            <person name="Moran F."/>
            <person name="Moya A."/>
        </authorList>
    </citation>
    <scope>NUCLEOTIDE SEQUENCE [LARGE SCALE GENOMIC DNA]</scope>
    <source>
        <strain>Bp</strain>
    </source>
</reference>
<evidence type="ECO:0000255" key="1">
    <source>
        <dbReference type="HAMAP-Rule" id="MF_00759"/>
    </source>
</evidence>
<proteinExistence type="inferred from homology"/>
<keyword id="KW-0963">Cytoplasm</keyword>
<keyword id="KW-0227">DNA damage</keyword>
<keyword id="KW-0234">DNA repair</keyword>
<keyword id="KW-0255">Endonuclease</keyword>
<keyword id="KW-0378">Hydrolase</keyword>
<keyword id="KW-0540">Nuclease</keyword>
<keyword id="KW-1185">Reference proteome</keyword>
<name>MUTH_BUCBP</name>
<dbReference type="EMBL" id="AE016826">
    <property type="protein sequence ID" value="AAO26762.1"/>
    <property type="molecule type" value="Genomic_DNA"/>
</dbReference>
<dbReference type="RefSeq" id="WP_011091163.1">
    <property type="nucleotide sequence ID" value="NC_004545.1"/>
</dbReference>
<dbReference type="SMR" id="Q89B33"/>
<dbReference type="STRING" id="224915.bbp_018"/>
<dbReference type="KEGG" id="bab:bbp_018"/>
<dbReference type="eggNOG" id="COG3066">
    <property type="taxonomic scope" value="Bacteria"/>
</dbReference>
<dbReference type="HOGENOM" id="CLU_086669_0_0_6"/>
<dbReference type="OrthoDB" id="5634909at2"/>
<dbReference type="Proteomes" id="UP000000601">
    <property type="component" value="Chromosome"/>
</dbReference>
<dbReference type="GO" id="GO:0005737">
    <property type="term" value="C:cytoplasm"/>
    <property type="evidence" value="ECO:0007669"/>
    <property type="project" value="UniProtKB-SubCell"/>
</dbReference>
<dbReference type="GO" id="GO:0003677">
    <property type="term" value="F:DNA binding"/>
    <property type="evidence" value="ECO:0007669"/>
    <property type="project" value="InterPro"/>
</dbReference>
<dbReference type="GO" id="GO:0004519">
    <property type="term" value="F:endonuclease activity"/>
    <property type="evidence" value="ECO:0007669"/>
    <property type="project" value="UniProtKB-UniRule"/>
</dbReference>
<dbReference type="GO" id="GO:0006304">
    <property type="term" value="P:DNA modification"/>
    <property type="evidence" value="ECO:0007669"/>
    <property type="project" value="InterPro"/>
</dbReference>
<dbReference type="GO" id="GO:0006298">
    <property type="term" value="P:mismatch repair"/>
    <property type="evidence" value="ECO:0007669"/>
    <property type="project" value="UniProtKB-UniRule"/>
</dbReference>
<dbReference type="Gene3D" id="3.40.600.10">
    <property type="entry name" value="DNA mismatch repair MutH/Restriction endonuclease, type II"/>
    <property type="match status" value="1"/>
</dbReference>
<dbReference type="HAMAP" id="MF_00759">
    <property type="entry name" value="MutH"/>
    <property type="match status" value="1"/>
</dbReference>
<dbReference type="InterPro" id="IPR004230">
    <property type="entry name" value="DNA_mismatch_repair_MutH"/>
</dbReference>
<dbReference type="InterPro" id="IPR011337">
    <property type="entry name" value="DNA_rep_MutH/RE_typeII_Sau3AI"/>
</dbReference>
<dbReference type="InterPro" id="IPR037057">
    <property type="entry name" value="DNA_rep_MutH/T2_RE_sf"/>
</dbReference>
<dbReference type="InterPro" id="IPR011335">
    <property type="entry name" value="Restrct_endonuc-II-like"/>
</dbReference>
<dbReference type="NCBIfam" id="TIGR02248">
    <property type="entry name" value="mutH_TIGR"/>
    <property type="match status" value="1"/>
</dbReference>
<dbReference type="NCBIfam" id="NF003458">
    <property type="entry name" value="PRK05070.1"/>
    <property type="match status" value="1"/>
</dbReference>
<dbReference type="Pfam" id="PF02976">
    <property type="entry name" value="MutH"/>
    <property type="match status" value="1"/>
</dbReference>
<dbReference type="SMART" id="SM00927">
    <property type="entry name" value="MutH"/>
    <property type="match status" value="1"/>
</dbReference>
<dbReference type="SUPFAM" id="SSF52980">
    <property type="entry name" value="Restriction endonuclease-like"/>
    <property type="match status" value="1"/>
</dbReference>
<comment type="function">
    <text evidence="1">Sequence-specific endonuclease that cleaves unmethylated GATC sequences. It is involved in DNA mismatch repair.</text>
</comment>
<comment type="subcellular location">
    <subcellularLocation>
        <location evidence="1">Cytoplasm</location>
    </subcellularLocation>
</comment>
<comment type="similarity">
    <text evidence="1">Belongs to the MutH family.</text>
</comment>
<feature type="chain" id="PRO_0000198664" description="DNA mismatch repair protein MutH">
    <location>
        <begin position="1"/>
        <end position="220"/>
    </location>
</feature>
<sequence>MCVFCEKKLFMHAIGLSGYSIREIVSSLDQPVSNSLVRNKGFVGKILELILGVNVLHGYKCIDFPSLGIELKSIPINSSGYPLEPTFICNIPLKNNSLNITWNNSYFYRKIKKILWIPIIGNRVVSFLDKIVGEAFIWTMSSVQEKILKKDWEEFMDLIIIGKVEYISSKHGQVLQVKKKCKNKHVCIKFINYNGCVKFTNPRAFYFRKSFTWSLLNLSK</sequence>